<keyword id="KW-0479">Metal-binding</keyword>
<keyword id="KW-0539">Nucleus</keyword>
<keyword id="KW-1185">Reference proteome</keyword>
<keyword id="KW-0862">Zinc</keyword>
<comment type="subunit">
    <text evidence="1">May interact with FAM168B.</text>
</comment>
<comment type="subcellular location">
    <subcellularLocation>
        <location evidence="1">Nucleus</location>
        <location evidence="1">Nucleolus</location>
    </subcellularLocation>
</comment>
<comment type="similarity">
    <text evidence="3">Belongs to the yippee family.</text>
</comment>
<sequence>MVKMTRSKTFQAYLPSCHRTYSCIHCRAHLANHDELISKSFQGSQGRAYLFNSVVNVGCGPAEERVLLTGLHAVADIYCENCKTTLGWKYEHAFESSQKYKEGKYIIELAHMIKDNGWD</sequence>
<dbReference type="EMBL" id="CR857865">
    <property type="protein sequence ID" value="CAH90118.1"/>
    <property type="molecule type" value="mRNA"/>
</dbReference>
<dbReference type="RefSeq" id="NP_001125019.1">
    <property type="nucleotide sequence ID" value="NM_001131547.1"/>
</dbReference>
<dbReference type="RefSeq" id="XP_009234743.1">
    <property type="nucleotide sequence ID" value="XM_009236468.4"/>
</dbReference>
<dbReference type="SMR" id="Q5RDN9"/>
<dbReference type="FunCoup" id="Q5RDN9">
    <property type="interactions" value="732"/>
</dbReference>
<dbReference type="STRING" id="9601.ENSPPYP00000009893"/>
<dbReference type="GeneID" id="100171898"/>
<dbReference type="KEGG" id="pon:100171898"/>
<dbReference type="CTD" id="388403"/>
<dbReference type="eggNOG" id="KOG3399">
    <property type="taxonomic scope" value="Eukaryota"/>
</dbReference>
<dbReference type="HOGENOM" id="CLU_043857_5_2_1"/>
<dbReference type="InParanoid" id="Q5RDN9"/>
<dbReference type="OrthoDB" id="6407410at2759"/>
<dbReference type="TreeFam" id="TF313936"/>
<dbReference type="Proteomes" id="UP000001595">
    <property type="component" value="Unplaced"/>
</dbReference>
<dbReference type="GO" id="GO:0005730">
    <property type="term" value="C:nucleolus"/>
    <property type="evidence" value="ECO:0007669"/>
    <property type="project" value="UniProtKB-SubCell"/>
</dbReference>
<dbReference type="GO" id="GO:0046872">
    <property type="term" value="F:metal ion binding"/>
    <property type="evidence" value="ECO:0007669"/>
    <property type="project" value="UniProtKB-KW"/>
</dbReference>
<dbReference type="InterPro" id="IPR034751">
    <property type="entry name" value="Yippee"/>
</dbReference>
<dbReference type="InterPro" id="IPR004910">
    <property type="entry name" value="Yippee/Mis18/Cereblon"/>
</dbReference>
<dbReference type="InterPro" id="IPR039058">
    <property type="entry name" value="Yippee_fam"/>
</dbReference>
<dbReference type="PANTHER" id="PTHR13848">
    <property type="entry name" value="PROTEIN YIPPEE-LIKE CG15309-RELATED"/>
    <property type="match status" value="1"/>
</dbReference>
<dbReference type="Pfam" id="PF03226">
    <property type="entry name" value="Yippee-Mis18"/>
    <property type="match status" value="1"/>
</dbReference>
<dbReference type="PROSITE" id="PS51792">
    <property type="entry name" value="YIPPEE"/>
    <property type="match status" value="1"/>
</dbReference>
<reference key="1">
    <citation type="submission" date="2004-11" db="EMBL/GenBank/DDBJ databases">
        <authorList>
            <consortium name="The German cDNA consortium"/>
        </authorList>
    </citation>
    <scope>NUCLEOTIDE SEQUENCE [LARGE SCALE MRNA]</scope>
    <source>
        <tissue>Kidney</tissue>
    </source>
</reference>
<name>YPEL2_PONAB</name>
<feature type="chain" id="PRO_0000212387" description="Protein yippee-like 2">
    <location>
        <begin position="1"/>
        <end position="119"/>
    </location>
</feature>
<feature type="domain" description="Yippee" evidence="2">
    <location>
        <begin position="19"/>
        <end position="116"/>
    </location>
</feature>
<feature type="binding site" evidence="2">
    <location>
        <position position="23"/>
    </location>
    <ligand>
        <name>Zn(2+)</name>
        <dbReference type="ChEBI" id="CHEBI:29105"/>
    </ligand>
</feature>
<feature type="binding site" evidence="2">
    <location>
        <position position="26"/>
    </location>
    <ligand>
        <name>Zn(2+)</name>
        <dbReference type="ChEBI" id="CHEBI:29105"/>
    </ligand>
</feature>
<feature type="binding site" evidence="2">
    <location>
        <position position="79"/>
    </location>
    <ligand>
        <name>Zn(2+)</name>
        <dbReference type="ChEBI" id="CHEBI:29105"/>
    </ligand>
</feature>
<feature type="binding site" evidence="2">
    <location>
        <position position="82"/>
    </location>
    <ligand>
        <name>Zn(2+)</name>
        <dbReference type="ChEBI" id="CHEBI:29105"/>
    </ligand>
</feature>
<evidence type="ECO:0000250" key="1"/>
<evidence type="ECO:0000255" key="2">
    <source>
        <dbReference type="PROSITE-ProRule" id="PRU01128"/>
    </source>
</evidence>
<evidence type="ECO:0000305" key="3"/>
<accession>Q5RDN9</accession>
<proteinExistence type="inferred from homology"/>
<protein>
    <recommendedName>
        <fullName>Protein yippee-like 2</fullName>
    </recommendedName>
</protein>
<gene>
    <name type="primary">YPEL2</name>
</gene>
<organism>
    <name type="scientific">Pongo abelii</name>
    <name type="common">Sumatran orangutan</name>
    <name type="synonym">Pongo pygmaeus abelii</name>
    <dbReference type="NCBI Taxonomy" id="9601"/>
    <lineage>
        <taxon>Eukaryota</taxon>
        <taxon>Metazoa</taxon>
        <taxon>Chordata</taxon>
        <taxon>Craniata</taxon>
        <taxon>Vertebrata</taxon>
        <taxon>Euteleostomi</taxon>
        <taxon>Mammalia</taxon>
        <taxon>Eutheria</taxon>
        <taxon>Euarchontoglires</taxon>
        <taxon>Primates</taxon>
        <taxon>Haplorrhini</taxon>
        <taxon>Catarrhini</taxon>
        <taxon>Hominidae</taxon>
        <taxon>Pongo</taxon>
    </lineage>
</organism>